<proteinExistence type="inferred from homology"/>
<organism>
    <name type="scientific">Rickettsia typhi (strain ATCC VR-144 / Wilmington)</name>
    <dbReference type="NCBI Taxonomy" id="257363"/>
    <lineage>
        <taxon>Bacteria</taxon>
        <taxon>Pseudomonadati</taxon>
        <taxon>Pseudomonadota</taxon>
        <taxon>Alphaproteobacteria</taxon>
        <taxon>Rickettsiales</taxon>
        <taxon>Rickettsiaceae</taxon>
        <taxon>Rickettsieae</taxon>
        <taxon>Rickettsia</taxon>
        <taxon>typhus group</taxon>
    </lineage>
</organism>
<keyword id="KW-0687">Ribonucleoprotein</keyword>
<keyword id="KW-0689">Ribosomal protein</keyword>
<evidence type="ECO:0000255" key="1">
    <source>
        <dbReference type="HAMAP-Rule" id="MF_00294"/>
    </source>
</evidence>
<evidence type="ECO:0000305" key="2"/>
<dbReference type="EMBL" id="AE017197">
    <property type="protein sequence ID" value="AAU04321.1"/>
    <property type="molecule type" value="Genomic_DNA"/>
</dbReference>
<dbReference type="RefSeq" id="WP_011191295.1">
    <property type="nucleotide sequence ID" value="NC_006142.1"/>
</dbReference>
<dbReference type="SMR" id="Q68VN5"/>
<dbReference type="KEGG" id="rty:RT0870"/>
<dbReference type="eggNOG" id="COG0267">
    <property type="taxonomic scope" value="Bacteria"/>
</dbReference>
<dbReference type="HOGENOM" id="CLU_190949_1_0_5"/>
<dbReference type="OrthoDB" id="21586at2"/>
<dbReference type="Proteomes" id="UP000000604">
    <property type="component" value="Chromosome"/>
</dbReference>
<dbReference type="GO" id="GO:0005737">
    <property type="term" value="C:cytoplasm"/>
    <property type="evidence" value="ECO:0007669"/>
    <property type="project" value="UniProtKB-ARBA"/>
</dbReference>
<dbReference type="GO" id="GO:0015934">
    <property type="term" value="C:large ribosomal subunit"/>
    <property type="evidence" value="ECO:0007669"/>
    <property type="project" value="TreeGrafter"/>
</dbReference>
<dbReference type="GO" id="GO:0003735">
    <property type="term" value="F:structural constituent of ribosome"/>
    <property type="evidence" value="ECO:0007669"/>
    <property type="project" value="InterPro"/>
</dbReference>
<dbReference type="GO" id="GO:0006412">
    <property type="term" value="P:translation"/>
    <property type="evidence" value="ECO:0007669"/>
    <property type="project" value="UniProtKB-UniRule"/>
</dbReference>
<dbReference type="Gene3D" id="2.20.28.120">
    <property type="entry name" value="Ribosomal protein L33"/>
    <property type="match status" value="1"/>
</dbReference>
<dbReference type="HAMAP" id="MF_00294">
    <property type="entry name" value="Ribosomal_bL33"/>
    <property type="match status" value="1"/>
</dbReference>
<dbReference type="InterPro" id="IPR001705">
    <property type="entry name" value="Ribosomal_bL33"/>
</dbReference>
<dbReference type="InterPro" id="IPR018264">
    <property type="entry name" value="Ribosomal_bL33_CS"/>
</dbReference>
<dbReference type="InterPro" id="IPR038584">
    <property type="entry name" value="Ribosomal_bL33_sf"/>
</dbReference>
<dbReference type="InterPro" id="IPR011332">
    <property type="entry name" value="Ribosomal_zn-bd"/>
</dbReference>
<dbReference type="NCBIfam" id="NF001860">
    <property type="entry name" value="PRK00595.1"/>
    <property type="match status" value="1"/>
</dbReference>
<dbReference type="NCBIfam" id="TIGR01023">
    <property type="entry name" value="rpmG_bact"/>
    <property type="match status" value="1"/>
</dbReference>
<dbReference type="PANTHER" id="PTHR15238">
    <property type="entry name" value="54S RIBOSOMAL PROTEIN L39, MITOCHONDRIAL"/>
    <property type="match status" value="1"/>
</dbReference>
<dbReference type="PANTHER" id="PTHR15238:SF1">
    <property type="entry name" value="LARGE RIBOSOMAL SUBUNIT PROTEIN BL33M"/>
    <property type="match status" value="1"/>
</dbReference>
<dbReference type="Pfam" id="PF00471">
    <property type="entry name" value="Ribosomal_L33"/>
    <property type="match status" value="1"/>
</dbReference>
<dbReference type="SUPFAM" id="SSF57829">
    <property type="entry name" value="Zn-binding ribosomal proteins"/>
    <property type="match status" value="1"/>
</dbReference>
<dbReference type="PROSITE" id="PS00582">
    <property type="entry name" value="RIBOSOMAL_L33"/>
    <property type="match status" value="1"/>
</dbReference>
<comment type="similarity">
    <text evidence="1">Belongs to the bacterial ribosomal protein bL33 family.</text>
</comment>
<feature type="chain" id="PRO_0000278016" description="Large ribosomal subunit protein bL33">
    <location>
        <begin position="1"/>
        <end position="56"/>
    </location>
</feature>
<gene>
    <name evidence="1" type="primary">rpmG</name>
    <name type="ordered locus">RT0870</name>
</gene>
<accession>Q68VN5</accession>
<reference key="1">
    <citation type="journal article" date="2004" name="J. Bacteriol.">
        <title>Complete genome sequence of Rickettsia typhi and comparison with sequences of other Rickettsiae.</title>
        <authorList>
            <person name="McLeod M.P."/>
            <person name="Qin X."/>
            <person name="Karpathy S.E."/>
            <person name="Gioia J."/>
            <person name="Highlander S.K."/>
            <person name="Fox G.E."/>
            <person name="McNeill T.Z."/>
            <person name="Jiang H."/>
            <person name="Muzny D."/>
            <person name="Jacob L.S."/>
            <person name="Hawes A.C."/>
            <person name="Sodergren E."/>
            <person name="Gill R."/>
            <person name="Hume J."/>
            <person name="Morgan M."/>
            <person name="Fan G."/>
            <person name="Amin A.G."/>
            <person name="Gibbs R.A."/>
            <person name="Hong C."/>
            <person name="Yu X.-J."/>
            <person name="Walker D.H."/>
            <person name="Weinstock G.M."/>
        </authorList>
    </citation>
    <scope>NUCLEOTIDE SEQUENCE [LARGE SCALE GENOMIC DNA]</scope>
    <source>
        <strain>ATCC VR-144 / Wilmington</strain>
    </source>
</reference>
<sequence length="56" mass="6632">MAKKNKNVLVRLVSTAGTGVFWVKKRNPKTQTEKLSFRKYDKVVRKHVIFKEEKIK</sequence>
<name>RL33_RICTY</name>
<protein>
    <recommendedName>
        <fullName evidence="1">Large ribosomal subunit protein bL33</fullName>
    </recommendedName>
    <alternativeName>
        <fullName evidence="2">50S ribosomal protein L33</fullName>
    </alternativeName>
</protein>